<evidence type="ECO:0000255" key="1">
    <source>
        <dbReference type="HAMAP-Rule" id="MF_00658"/>
    </source>
</evidence>
<accession>B7LLH6</accession>
<proteinExistence type="inferred from homology"/>
<sequence>MKLQLVAVGTKMPAWVETGFTEYLRRFPKDMPFELVEIPAGKRGKNADIKRILEKEGEQMLAAAGKNRIVTLDIPGKPWDTPQLAAELERWKLDGRDVSLLIGGPEGLSPACKAAAEQSWSLSALTLPHPLVRVLVAESLYRAWSITTNHPYHRE</sequence>
<reference key="1">
    <citation type="journal article" date="2009" name="PLoS Genet.">
        <title>Organised genome dynamics in the Escherichia coli species results in highly diverse adaptive paths.</title>
        <authorList>
            <person name="Touchon M."/>
            <person name="Hoede C."/>
            <person name="Tenaillon O."/>
            <person name="Barbe V."/>
            <person name="Baeriswyl S."/>
            <person name="Bidet P."/>
            <person name="Bingen E."/>
            <person name="Bonacorsi S."/>
            <person name="Bouchier C."/>
            <person name="Bouvet O."/>
            <person name="Calteau A."/>
            <person name="Chiapello H."/>
            <person name="Clermont O."/>
            <person name="Cruveiller S."/>
            <person name="Danchin A."/>
            <person name="Diard M."/>
            <person name="Dossat C."/>
            <person name="Karoui M.E."/>
            <person name="Frapy E."/>
            <person name="Garry L."/>
            <person name="Ghigo J.M."/>
            <person name="Gilles A.M."/>
            <person name="Johnson J."/>
            <person name="Le Bouguenec C."/>
            <person name="Lescat M."/>
            <person name="Mangenot S."/>
            <person name="Martinez-Jehanne V."/>
            <person name="Matic I."/>
            <person name="Nassif X."/>
            <person name="Oztas S."/>
            <person name="Petit M.A."/>
            <person name="Pichon C."/>
            <person name="Rouy Z."/>
            <person name="Ruf C.S."/>
            <person name="Schneider D."/>
            <person name="Tourret J."/>
            <person name="Vacherie B."/>
            <person name="Vallenet D."/>
            <person name="Medigue C."/>
            <person name="Rocha E.P.C."/>
            <person name="Denamur E."/>
        </authorList>
    </citation>
    <scope>NUCLEOTIDE SEQUENCE [LARGE SCALE GENOMIC DNA]</scope>
    <source>
        <strain>ATCC 35469 / DSM 13698 / BCRC 15582 / CCUG 18766 / IAM 14443 / JCM 21226 / LMG 7866 / NBRC 102419 / NCTC 12128 / CDC 0568-73</strain>
    </source>
</reference>
<dbReference type="EC" id="2.1.1.177" evidence="1"/>
<dbReference type="EMBL" id="CU928158">
    <property type="protein sequence ID" value="CAQ89966.1"/>
    <property type="molecule type" value="Genomic_DNA"/>
</dbReference>
<dbReference type="RefSeq" id="WP_000776098.1">
    <property type="nucleotide sequence ID" value="NC_011740.1"/>
</dbReference>
<dbReference type="SMR" id="B7LLH6"/>
<dbReference type="GeneID" id="75056495"/>
<dbReference type="KEGG" id="efe:EFER_2469"/>
<dbReference type="HOGENOM" id="CLU_100552_1_0_6"/>
<dbReference type="OrthoDB" id="9806643at2"/>
<dbReference type="Proteomes" id="UP000000745">
    <property type="component" value="Chromosome"/>
</dbReference>
<dbReference type="GO" id="GO:0005737">
    <property type="term" value="C:cytoplasm"/>
    <property type="evidence" value="ECO:0007669"/>
    <property type="project" value="UniProtKB-SubCell"/>
</dbReference>
<dbReference type="GO" id="GO:0070038">
    <property type="term" value="F:rRNA (pseudouridine-N3-)-methyltransferase activity"/>
    <property type="evidence" value="ECO:0007669"/>
    <property type="project" value="UniProtKB-UniRule"/>
</dbReference>
<dbReference type="CDD" id="cd18081">
    <property type="entry name" value="RlmH-like"/>
    <property type="match status" value="1"/>
</dbReference>
<dbReference type="FunFam" id="3.40.1280.10:FF:000004">
    <property type="entry name" value="Ribosomal RNA large subunit methyltransferase H"/>
    <property type="match status" value="1"/>
</dbReference>
<dbReference type="Gene3D" id="3.40.1280.10">
    <property type="match status" value="1"/>
</dbReference>
<dbReference type="HAMAP" id="MF_00658">
    <property type="entry name" value="23SrRNA_methyltr_H"/>
    <property type="match status" value="1"/>
</dbReference>
<dbReference type="InterPro" id="IPR029028">
    <property type="entry name" value="Alpha/beta_knot_MTases"/>
</dbReference>
<dbReference type="InterPro" id="IPR003742">
    <property type="entry name" value="RlmH-like"/>
</dbReference>
<dbReference type="InterPro" id="IPR029026">
    <property type="entry name" value="tRNA_m1G_MTases_N"/>
</dbReference>
<dbReference type="NCBIfam" id="NF000984">
    <property type="entry name" value="PRK00103.1-1"/>
    <property type="match status" value="1"/>
</dbReference>
<dbReference type="NCBIfam" id="NF000986">
    <property type="entry name" value="PRK00103.1-4"/>
    <property type="match status" value="1"/>
</dbReference>
<dbReference type="NCBIfam" id="TIGR00246">
    <property type="entry name" value="tRNA_RlmH_YbeA"/>
    <property type="match status" value="1"/>
</dbReference>
<dbReference type="PANTHER" id="PTHR33603">
    <property type="entry name" value="METHYLTRANSFERASE"/>
    <property type="match status" value="1"/>
</dbReference>
<dbReference type="PANTHER" id="PTHR33603:SF1">
    <property type="entry name" value="RIBOSOMAL RNA LARGE SUBUNIT METHYLTRANSFERASE H"/>
    <property type="match status" value="1"/>
</dbReference>
<dbReference type="Pfam" id="PF02590">
    <property type="entry name" value="SPOUT_MTase"/>
    <property type="match status" value="1"/>
</dbReference>
<dbReference type="PIRSF" id="PIRSF004505">
    <property type="entry name" value="MT_bac"/>
    <property type="match status" value="1"/>
</dbReference>
<dbReference type="SUPFAM" id="SSF75217">
    <property type="entry name" value="alpha/beta knot"/>
    <property type="match status" value="1"/>
</dbReference>
<organism>
    <name type="scientific">Escherichia fergusonii (strain ATCC 35469 / DSM 13698 / CCUG 18766 / IAM 14443 / JCM 21226 / LMG 7866 / NBRC 102419 / NCTC 12128 / CDC 0568-73)</name>
    <dbReference type="NCBI Taxonomy" id="585054"/>
    <lineage>
        <taxon>Bacteria</taxon>
        <taxon>Pseudomonadati</taxon>
        <taxon>Pseudomonadota</taxon>
        <taxon>Gammaproteobacteria</taxon>
        <taxon>Enterobacterales</taxon>
        <taxon>Enterobacteriaceae</taxon>
        <taxon>Escherichia</taxon>
    </lineage>
</organism>
<feature type="chain" id="PRO_1000131233" description="Ribosomal RNA large subunit methyltransferase H">
    <location>
        <begin position="1"/>
        <end position="155"/>
    </location>
</feature>
<feature type="binding site" evidence="1">
    <location>
        <position position="72"/>
    </location>
    <ligand>
        <name>S-adenosyl-L-methionine</name>
        <dbReference type="ChEBI" id="CHEBI:59789"/>
    </ligand>
</feature>
<feature type="binding site" evidence="1">
    <location>
        <position position="103"/>
    </location>
    <ligand>
        <name>S-adenosyl-L-methionine</name>
        <dbReference type="ChEBI" id="CHEBI:59789"/>
    </ligand>
</feature>
<feature type="binding site" evidence="1">
    <location>
        <begin position="122"/>
        <end position="127"/>
    </location>
    <ligand>
        <name>S-adenosyl-L-methionine</name>
        <dbReference type="ChEBI" id="CHEBI:59789"/>
    </ligand>
</feature>
<keyword id="KW-0963">Cytoplasm</keyword>
<keyword id="KW-0489">Methyltransferase</keyword>
<keyword id="KW-0698">rRNA processing</keyword>
<keyword id="KW-0949">S-adenosyl-L-methionine</keyword>
<keyword id="KW-0808">Transferase</keyword>
<gene>
    <name evidence="1" type="primary">rlmH</name>
    <name type="ordered locus">EFER_2469</name>
</gene>
<name>RLMH_ESCF3</name>
<comment type="function">
    <text evidence="1">Specifically methylates the pseudouridine at position 1915 (m3Psi1915) in 23S rRNA.</text>
</comment>
<comment type="catalytic activity">
    <reaction evidence="1">
        <text>pseudouridine(1915) in 23S rRNA + S-adenosyl-L-methionine = N(3)-methylpseudouridine(1915) in 23S rRNA + S-adenosyl-L-homocysteine + H(+)</text>
        <dbReference type="Rhea" id="RHEA:42752"/>
        <dbReference type="Rhea" id="RHEA-COMP:10221"/>
        <dbReference type="Rhea" id="RHEA-COMP:10222"/>
        <dbReference type="ChEBI" id="CHEBI:15378"/>
        <dbReference type="ChEBI" id="CHEBI:57856"/>
        <dbReference type="ChEBI" id="CHEBI:59789"/>
        <dbReference type="ChEBI" id="CHEBI:65314"/>
        <dbReference type="ChEBI" id="CHEBI:74486"/>
        <dbReference type="EC" id="2.1.1.177"/>
    </reaction>
</comment>
<comment type="subunit">
    <text evidence="1">Homodimer.</text>
</comment>
<comment type="subcellular location">
    <subcellularLocation>
        <location evidence="1">Cytoplasm</location>
    </subcellularLocation>
</comment>
<comment type="similarity">
    <text evidence="1">Belongs to the RNA methyltransferase RlmH family.</text>
</comment>
<protein>
    <recommendedName>
        <fullName evidence="1">Ribosomal RNA large subunit methyltransferase H</fullName>
        <ecNumber evidence="1">2.1.1.177</ecNumber>
    </recommendedName>
    <alternativeName>
        <fullName evidence="1">23S rRNA (pseudouridine1915-N3)-methyltransferase</fullName>
    </alternativeName>
    <alternativeName>
        <fullName evidence="1">23S rRNA m3Psi1915 methyltransferase</fullName>
    </alternativeName>
    <alternativeName>
        <fullName evidence="1">rRNA (pseudouridine-N3-)-methyltransferase RlmH</fullName>
    </alternativeName>
</protein>